<keyword id="KW-0235">DNA replication</keyword>
<comment type="function">
    <text evidence="1">Required for the timely initiation of chromosomal replication via direct interactions with the DnaA initiator protein.</text>
</comment>
<comment type="subunit">
    <text evidence="1">Homotetramer; dimer of dimers.</text>
</comment>
<comment type="similarity">
    <text evidence="1">Belongs to the SIS family. DiaA subfamily.</text>
</comment>
<evidence type="ECO:0000255" key="1">
    <source>
        <dbReference type="HAMAP-Rule" id="MF_01157"/>
    </source>
</evidence>
<dbReference type="EMBL" id="CU928160">
    <property type="protein sequence ID" value="CAR00113.1"/>
    <property type="molecule type" value="Genomic_DNA"/>
</dbReference>
<dbReference type="RefSeq" id="WP_001158035.1">
    <property type="nucleotide sequence ID" value="NC_011741.1"/>
</dbReference>
<dbReference type="SMR" id="B7M057"/>
<dbReference type="GeneID" id="75206004"/>
<dbReference type="KEGG" id="ecr:ECIAI1_3299"/>
<dbReference type="HOGENOM" id="CLU_080999_3_1_6"/>
<dbReference type="GO" id="GO:0097367">
    <property type="term" value="F:carbohydrate derivative binding"/>
    <property type="evidence" value="ECO:0007669"/>
    <property type="project" value="InterPro"/>
</dbReference>
<dbReference type="GO" id="GO:1901135">
    <property type="term" value="P:carbohydrate derivative metabolic process"/>
    <property type="evidence" value="ECO:0007669"/>
    <property type="project" value="InterPro"/>
</dbReference>
<dbReference type="GO" id="GO:0006260">
    <property type="term" value="P:DNA replication"/>
    <property type="evidence" value="ECO:0007669"/>
    <property type="project" value="UniProtKB-UniRule"/>
</dbReference>
<dbReference type="CDD" id="cd05006">
    <property type="entry name" value="SIS_GmhA"/>
    <property type="match status" value="1"/>
</dbReference>
<dbReference type="FunFam" id="3.40.50.10490:FF:000006">
    <property type="entry name" value="DnaA initiator-associating protein DiaA"/>
    <property type="match status" value="1"/>
</dbReference>
<dbReference type="Gene3D" id="3.40.50.10490">
    <property type="entry name" value="Glucose-6-phosphate isomerase like protein, domain 1"/>
    <property type="match status" value="1"/>
</dbReference>
<dbReference type="HAMAP" id="MF_01157">
    <property type="entry name" value="SIS_DiaA"/>
    <property type="match status" value="1"/>
</dbReference>
<dbReference type="InterPro" id="IPR023070">
    <property type="entry name" value="DiaA"/>
</dbReference>
<dbReference type="InterPro" id="IPR035461">
    <property type="entry name" value="GmhA/DiaA"/>
</dbReference>
<dbReference type="InterPro" id="IPR001347">
    <property type="entry name" value="SIS_dom"/>
</dbReference>
<dbReference type="InterPro" id="IPR046348">
    <property type="entry name" value="SIS_dom_sf"/>
</dbReference>
<dbReference type="InterPro" id="IPR050099">
    <property type="entry name" value="SIS_GmhA/DiaA_subfam"/>
</dbReference>
<dbReference type="NCBIfam" id="NF008138">
    <property type="entry name" value="PRK10886.1"/>
    <property type="match status" value="1"/>
</dbReference>
<dbReference type="NCBIfam" id="NF010546">
    <property type="entry name" value="PRK13936.1"/>
    <property type="match status" value="1"/>
</dbReference>
<dbReference type="PANTHER" id="PTHR30390:SF6">
    <property type="entry name" value="DNAA INITIATOR-ASSOCIATING PROTEIN DIAA"/>
    <property type="match status" value="1"/>
</dbReference>
<dbReference type="PANTHER" id="PTHR30390">
    <property type="entry name" value="SEDOHEPTULOSE 7-PHOSPHATE ISOMERASE / DNAA INITIATOR-ASSOCIATING FACTOR FOR REPLICATION INITIATION"/>
    <property type="match status" value="1"/>
</dbReference>
<dbReference type="Pfam" id="PF13580">
    <property type="entry name" value="SIS_2"/>
    <property type="match status" value="1"/>
</dbReference>
<dbReference type="SUPFAM" id="SSF53697">
    <property type="entry name" value="SIS domain"/>
    <property type="match status" value="1"/>
</dbReference>
<dbReference type="PROSITE" id="PS51464">
    <property type="entry name" value="SIS"/>
    <property type="match status" value="1"/>
</dbReference>
<reference key="1">
    <citation type="journal article" date="2009" name="PLoS Genet.">
        <title>Organised genome dynamics in the Escherichia coli species results in highly diverse adaptive paths.</title>
        <authorList>
            <person name="Touchon M."/>
            <person name="Hoede C."/>
            <person name="Tenaillon O."/>
            <person name="Barbe V."/>
            <person name="Baeriswyl S."/>
            <person name="Bidet P."/>
            <person name="Bingen E."/>
            <person name="Bonacorsi S."/>
            <person name="Bouchier C."/>
            <person name="Bouvet O."/>
            <person name="Calteau A."/>
            <person name="Chiapello H."/>
            <person name="Clermont O."/>
            <person name="Cruveiller S."/>
            <person name="Danchin A."/>
            <person name="Diard M."/>
            <person name="Dossat C."/>
            <person name="Karoui M.E."/>
            <person name="Frapy E."/>
            <person name="Garry L."/>
            <person name="Ghigo J.M."/>
            <person name="Gilles A.M."/>
            <person name="Johnson J."/>
            <person name="Le Bouguenec C."/>
            <person name="Lescat M."/>
            <person name="Mangenot S."/>
            <person name="Martinez-Jehanne V."/>
            <person name="Matic I."/>
            <person name="Nassif X."/>
            <person name="Oztas S."/>
            <person name="Petit M.A."/>
            <person name="Pichon C."/>
            <person name="Rouy Z."/>
            <person name="Ruf C.S."/>
            <person name="Schneider D."/>
            <person name="Tourret J."/>
            <person name="Vacherie B."/>
            <person name="Vallenet D."/>
            <person name="Medigue C."/>
            <person name="Rocha E.P.C."/>
            <person name="Denamur E."/>
        </authorList>
    </citation>
    <scope>NUCLEOTIDE SEQUENCE [LARGE SCALE GENOMIC DNA]</scope>
    <source>
        <strain>IAI1</strain>
    </source>
</reference>
<organism>
    <name type="scientific">Escherichia coli O8 (strain IAI1)</name>
    <dbReference type="NCBI Taxonomy" id="585034"/>
    <lineage>
        <taxon>Bacteria</taxon>
        <taxon>Pseudomonadati</taxon>
        <taxon>Pseudomonadota</taxon>
        <taxon>Gammaproteobacteria</taxon>
        <taxon>Enterobacterales</taxon>
        <taxon>Enterobacteriaceae</taxon>
        <taxon>Escherichia</taxon>
    </lineage>
</organism>
<feature type="chain" id="PRO_1000137787" description="DnaA initiator-associating protein DiaA">
    <location>
        <begin position="1"/>
        <end position="196"/>
    </location>
</feature>
<feature type="domain" description="SIS" evidence="1">
    <location>
        <begin position="34"/>
        <end position="196"/>
    </location>
</feature>
<proteinExistence type="inferred from homology"/>
<sequence length="196" mass="21090">MQERIKACFTESIQTQIAAAEALPDAISRAAMTLVQSLLNGNKILCCGNGTSAANAQHFAASMINRFETERPSLPAIALNTDNVVLTAIANDRLHDEVYAKQVRALGHAGDVLLAISTRGNSRDIVKAVEAAVTRDMTIVALTGYDGGELAGLLGPQDVEIRIPSHRSARIQEMHMLTVNCLCDLIDNTLFPHQDV</sequence>
<gene>
    <name evidence="1" type="primary">diaA</name>
    <name type="ordered locus">ECIAI1_3299</name>
</gene>
<name>DIAA_ECO8A</name>
<accession>B7M057</accession>
<protein>
    <recommendedName>
        <fullName evidence="1">DnaA initiator-associating protein DiaA</fullName>
    </recommendedName>
</protein>